<reference key="1">
    <citation type="journal article" date="2005" name="Science">
        <title>The transcriptional landscape of the mammalian genome.</title>
        <authorList>
            <person name="Carninci P."/>
            <person name="Kasukawa T."/>
            <person name="Katayama S."/>
            <person name="Gough J."/>
            <person name="Frith M.C."/>
            <person name="Maeda N."/>
            <person name="Oyama R."/>
            <person name="Ravasi T."/>
            <person name="Lenhard B."/>
            <person name="Wells C."/>
            <person name="Kodzius R."/>
            <person name="Shimokawa K."/>
            <person name="Bajic V.B."/>
            <person name="Brenner S.E."/>
            <person name="Batalov S."/>
            <person name="Forrest A.R."/>
            <person name="Zavolan M."/>
            <person name="Davis M.J."/>
            <person name="Wilming L.G."/>
            <person name="Aidinis V."/>
            <person name="Allen J.E."/>
            <person name="Ambesi-Impiombato A."/>
            <person name="Apweiler R."/>
            <person name="Aturaliya R.N."/>
            <person name="Bailey T.L."/>
            <person name="Bansal M."/>
            <person name="Baxter L."/>
            <person name="Beisel K.W."/>
            <person name="Bersano T."/>
            <person name="Bono H."/>
            <person name="Chalk A.M."/>
            <person name="Chiu K.P."/>
            <person name="Choudhary V."/>
            <person name="Christoffels A."/>
            <person name="Clutterbuck D.R."/>
            <person name="Crowe M.L."/>
            <person name="Dalla E."/>
            <person name="Dalrymple B.P."/>
            <person name="de Bono B."/>
            <person name="Della Gatta G."/>
            <person name="di Bernardo D."/>
            <person name="Down T."/>
            <person name="Engstrom P."/>
            <person name="Fagiolini M."/>
            <person name="Faulkner G."/>
            <person name="Fletcher C.F."/>
            <person name="Fukushima T."/>
            <person name="Furuno M."/>
            <person name="Futaki S."/>
            <person name="Gariboldi M."/>
            <person name="Georgii-Hemming P."/>
            <person name="Gingeras T.R."/>
            <person name="Gojobori T."/>
            <person name="Green R.E."/>
            <person name="Gustincich S."/>
            <person name="Harbers M."/>
            <person name="Hayashi Y."/>
            <person name="Hensch T.K."/>
            <person name="Hirokawa N."/>
            <person name="Hill D."/>
            <person name="Huminiecki L."/>
            <person name="Iacono M."/>
            <person name="Ikeo K."/>
            <person name="Iwama A."/>
            <person name="Ishikawa T."/>
            <person name="Jakt M."/>
            <person name="Kanapin A."/>
            <person name="Katoh M."/>
            <person name="Kawasawa Y."/>
            <person name="Kelso J."/>
            <person name="Kitamura H."/>
            <person name="Kitano H."/>
            <person name="Kollias G."/>
            <person name="Krishnan S.P."/>
            <person name="Kruger A."/>
            <person name="Kummerfeld S.K."/>
            <person name="Kurochkin I.V."/>
            <person name="Lareau L.F."/>
            <person name="Lazarevic D."/>
            <person name="Lipovich L."/>
            <person name="Liu J."/>
            <person name="Liuni S."/>
            <person name="McWilliam S."/>
            <person name="Madan Babu M."/>
            <person name="Madera M."/>
            <person name="Marchionni L."/>
            <person name="Matsuda H."/>
            <person name="Matsuzawa S."/>
            <person name="Miki H."/>
            <person name="Mignone F."/>
            <person name="Miyake S."/>
            <person name="Morris K."/>
            <person name="Mottagui-Tabar S."/>
            <person name="Mulder N."/>
            <person name="Nakano N."/>
            <person name="Nakauchi H."/>
            <person name="Ng P."/>
            <person name="Nilsson R."/>
            <person name="Nishiguchi S."/>
            <person name="Nishikawa S."/>
            <person name="Nori F."/>
            <person name="Ohara O."/>
            <person name="Okazaki Y."/>
            <person name="Orlando V."/>
            <person name="Pang K.C."/>
            <person name="Pavan W.J."/>
            <person name="Pavesi G."/>
            <person name="Pesole G."/>
            <person name="Petrovsky N."/>
            <person name="Piazza S."/>
            <person name="Reed J."/>
            <person name="Reid J.F."/>
            <person name="Ring B.Z."/>
            <person name="Ringwald M."/>
            <person name="Rost B."/>
            <person name="Ruan Y."/>
            <person name="Salzberg S.L."/>
            <person name="Sandelin A."/>
            <person name="Schneider C."/>
            <person name="Schoenbach C."/>
            <person name="Sekiguchi K."/>
            <person name="Semple C.A."/>
            <person name="Seno S."/>
            <person name="Sessa L."/>
            <person name="Sheng Y."/>
            <person name="Shibata Y."/>
            <person name="Shimada H."/>
            <person name="Shimada K."/>
            <person name="Silva D."/>
            <person name="Sinclair B."/>
            <person name="Sperling S."/>
            <person name="Stupka E."/>
            <person name="Sugiura K."/>
            <person name="Sultana R."/>
            <person name="Takenaka Y."/>
            <person name="Taki K."/>
            <person name="Tammoja K."/>
            <person name="Tan S.L."/>
            <person name="Tang S."/>
            <person name="Taylor M.S."/>
            <person name="Tegner J."/>
            <person name="Teichmann S.A."/>
            <person name="Ueda H.R."/>
            <person name="van Nimwegen E."/>
            <person name="Verardo R."/>
            <person name="Wei C.L."/>
            <person name="Yagi K."/>
            <person name="Yamanishi H."/>
            <person name="Zabarovsky E."/>
            <person name="Zhu S."/>
            <person name="Zimmer A."/>
            <person name="Hide W."/>
            <person name="Bult C."/>
            <person name="Grimmond S.M."/>
            <person name="Teasdale R.D."/>
            <person name="Liu E.T."/>
            <person name="Brusic V."/>
            <person name="Quackenbush J."/>
            <person name="Wahlestedt C."/>
            <person name="Mattick J.S."/>
            <person name="Hume D.A."/>
            <person name="Kai C."/>
            <person name="Sasaki D."/>
            <person name="Tomaru Y."/>
            <person name="Fukuda S."/>
            <person name="Kanamori-Katayama M."/>
            <person name="Suzuki M."/>
            <person name="Aoki J."/>
            <person name="Arakawa T."/>
            <person name="Iida J."/>
            <person name="Imamura K."/>
            <person name="Itoh M."/>
            <person name="Kato T."/>
            <person name="Kawaji H."/>
            <person name="Kawagashira N."/>
            <person name="Kawashima T."/>
            <person name="Kojima M."/>
            <person name="Kondo S."/>
            <person name="Konno H."/>
            <person name="Nakano K."/>
            <person name="Ninomiya N."/>
            <person name="Nishio T."/>
            <person name="Okada M."/>
            <person name="Plessy C."/>
            <person name="Shibata K."/>
            <person name="Shiraki T."/>
            <person name="Suzuki S."/>
            <person name="Tagami M."/>
            <person name="Waki K."/>
            <person name="Watahiki A."/>
            <person name="Okamura-Oho Y."/>
            <person name="Suzuki H."/>
            <person name="Kawai J."/>
            <person name="Hayashizaki Y."/>
        </authorList>
    </citation>
    <scope>NUCLEOTIDE SEQUENCE [LARGE SCALE MRNA]</scope>
    <source>
        <strain>C57BL/6J</strain>
        <tissue>Thymus</tissue>
    </source>
</reference>
<reference key="2">
    <citation type="journal article" date="2009" name="PLoS Biol.">
        <title>Lineage-specific biology revealed by a finished genome assembly of the mouse.</title>
        <authorList>
            <person name="Church D.M."/>
            <person name="Goodstadt L."/>
            <person name="Hillier L.W."/>
            <person name="Zody M.C."/>
            <person name="Goldstein S."/>
            <person name="She X."/>
            <person name="Bult C.J."/>
            <person name="Agarwala R."/>
            <person name="Cherry J.L."/>
            <person name="DiCuccio M."/>
            <person name="Hlavina W."/>
            <person name="Kapustin Y."/>
            <person name="Meric P."/>
            <person name="Maglott D."/>
            <person name="Birtle Z."/>
            <person name="Marques A.C."/>
            <person name="Graves T."/>
            <person name="Zhou S."/>
            <person name="Teague B."/>
            <person name="Potamousis K."/>
            <person name="Churas C."/>
            <person name="Place M."/>
            <person name="Herschleb J."/>
            <person name="Runnheim R."/>
            <person name="Forrest D."/>
            <person name="Amos-Landgraf J."/>
            <person name="Schwartz D.C."/>
            <person name="Cheng Z."/>
            <person name="Lindblad-Toh K."/>
            <person name="Eichler E.E."/>
            <person name="Ponting C.P."/>
        </authorList>
    </citation>
    <scope>NUCLEOTIDE SEQUENCE [LARGE SCALE GENOMIC DNA]</scope>
    <source>
        <strain>C57BL/6J</strain>
    </source>
</reference>
<reference key="3">
    <citation type="submission" date="2005-09" db="EMBL/GenBank/DDBJ databases">
        <authorList>
            <person name="Mural R.J."/>
            <person name="Adams M.D."/>
            <person name="Myers E.W."/>
            <person name="Smith H.O."/>
            <person name="Venter J.C."/>
        </authorList>
    </citation>
    <scope>NUCLEOTIDE SEQUENCE [LARGE SCALE GENOMIC DNA]</scope>
</reference>
<reference key="4">
    <citation type="journal article" date="2004" name="Genome Res.">
        <title>The status, quality, and expansion of the NIH full-length cDNA project: the Mammalian Gene Collection (MGC).</title>
        <authorList>
            <consortium name="The MGC Project Team"/>
        </authorList>
    </citation>
    <scope>NUCLEOTIDE SEQUENCE [LARGE SCALE MRNA]</scope>
    <source>
        <tissue>Brain</tissue>
    </source>
</reference>
<reference key="5">
    <citation type="journal article" date="2011" name="J. Biol. Chem.">
        <title>Idas, a novel phylogenetically conserved geminin-related protein, binds to geminin and is required for cell cycle progression.</title>
        <authorList>
            <person name="Pefani D.E."/>
            <person name="Dimaki M."/>
            <person name="Spella M."/>
            <person name="Karantzelis N."/>
            <person name="Mitsiki E."/>
            <person name="Kyrousi C."/>
            <person name="Symeonidou I.E."/>
            <person name="Perrakis A."/>
            <person name="Taraviras S."/>
            <person name="Lygerou Z."/>
        </authorList>
    </citation>
    <scope>DEVELOPMENTAL STAGE</scope>
    <scope>SUBCELLULAR LOCATION</scope>
</reference>
<name>MCIN_MOUSE</name>
<keyword id="KW-0010">Activator</keyword>
<keyword id="KW-0131">Cell cycle</keyword>
<keyword id="KW-0970">Cilium biogenesis/degradation</keyword>
<keyword id="KW-0175">Coiled coil</keyword>
<keyword id="KW-0539">Nucleus</keyword>
<keyword id="KW-1185">Reference proteome</keyword>
<keyword id="KW-0804">Transcription</keyword>
<keyword id="KW-0805">Transcription regulation</keyword>
<evidence type="ECO:0000250" key="1"/>
<evidence type="ECO:0000250" key="2">
    <source>
        <dbReference type="UniProtKB" id="D6RGH6"/>
    </source>
</evidence>
<evidence type="ECO:0000250" key="3">
    <source>
        <dbReference type="UniProtKB" id="Q08B36"/>
    </source>
</evidence>
<evidence type="ECO:0000256" key="4">
    <source>
        <dbReference type="SAM" id="MobiDB-lite"/>
    </source>
</evidence>
<evidence type="ECO:0000269" key="5">
    <source>
    </source>
</evidence>
<evidence type="ECO:0000305" key="6"/>
<organism>
    <name type="scientific">Mus musculus</name>
    <name type="common">Mouse</name>
    <dbReference type="NCBI Taxonomy" id="10090"/>
    <lineage>
        <taxon>Eukaryota</taxon>
        <taxon>Metazoa</taxon>
        <taxon>Chordata</taxon>
        <taxon>Craniata</taxon>
        <taxon>Vertebrata</taxon>
        <taxon>Euteleostomi</taxon>
        <taxon>Mammalia</taxon>
        <taxon>Eutheria</taxon>
        <taxon>Euarchontoglires</taxon>
        <taxon>Glires</taxon>
        <taxon>Rodentia</taxon>
        <taxon>Myomorpha</taxon>
        <taxon>Muroidea</taxon>
        <taxon>Muridae</taxon>
        <taxon>Murinae</taxon>
        <taxon>Mus</taxon>
        <taxon>Mus</taxon>
    </lineage>
</organism>
<accession>Q3UZ45</accession>
<gene>
    <name type="primary">Mcidas</name>
    <name type="synonym">Gm6320</name>
    <name type="synonym">Idas</name>
    <name type="synonym">Mci</name>
    <name type="synonym">Mcin</name>
</gene>
<comment type="function">
    <text evidence="2 3">Transcription regulator specifically required for multiciliate cell differentiation. Acts in a multiprotein complex containing E2F4 and E2F5 that binds and activates genes required for centriole biogenesis. Required for the deuterosome-mediated acentriolar pathway. Plays a role in mitotic cell cycle progression by promoting cell cycle exit. Modulates GMNN activity by reducing its affinity for CDT1.</text>
</comment>
<comment type="subunit">
    <text evidence="2">Heterodimer (via coiled-coil domain) with GMNN (via coiled-coil domain); targets GMNN to the nucleus. Can form homodimers (in vitro, via coiled-coil domain), but these are much less stable than the heterodimer formed with GMNN.</text>
</comment>
<comment type="subcellular location">
    <subcellularLocation>
        <location evidence="5">Nucleus</location>
    </subcellularLocation>
    <text evidence="2">Excluded from the nucleolus.</text>
</comment>
<comment type="developmental stage">
    <text evidence="5">At 12.5 dpc expression is restricted to the developing mouse brain. High levels are detected in the cortical hem and the choroid plexus epithelium in the telencephalic midline by cells starting to differentiate (at protein level).</text>
</comment>
<comment type="similarity">
    <text evidence="6">Belongs to the geminin family.</text>
</comment>
<dbReference type="EMBL" id="AK134107">
    <property type="protein sequence ID" value="BAE22015.1"/>
    <property type="molecule type" value="mRNA"/>
</dbReference>
<dbReference type="EMBL" id="AC165265">
    <property type="status" value="NOT_ANNOTATED_CDS"/>
    <property type="molecule type" value="Genomic_DNA"/>
</dbReference>
<dbReference type="EMBL" id="CH466568">
    <property type="protein sequence ID" value="EDL18399.1"/>
    <property type="molecule type" value="Genomic_DNA"/>
</dbReference>
<dbReference type="EMBL" id="BC150962">
    <property type="protein sequence ID" value="AAI50963.1"/>
    <property type="molecule type" value="mRNA"/>
</dbReference>
<dbReference type="CCDS" id="CCDS36783.1"/>
<dbReference type="RefSeq" id="NP_001033003.1">
    <property type="nucleotide sequence ID" value="NM_001037914.4"/>
</dbReference>
<dbReference type="SMR" id="Q3UZ45"/>
<dbReference type="FunCoup" id="Q3UZ45">
    <property type="interactions" value="1568"/>
</dbReference>
<dbReference type="STRING" id="10090.ENSMUSP00000089721"/>
<dbReference type="PhosphoSitePlus" id="Q3UZ45"/>
<dbReference type="PaxDb" id="10090-ENSMUSP00000089721"/>
<dbReference type="Antibodypedia" id="62363">
    <property type="antibodies" value="98 antibodies from 16 providers"/>
</dbReference>
<dbReference type="Ensembl" id="ENSMUST00000092089.6">
    <property type="protein sequence ID" value="ENSMUSP00000089721.5"/>
    <property type="gene ID" value="ENSMUSG00000074651.4"/>
</dbReference>
<dbReference type="GeneID" id="622408"/>
<dbReference type="KEGG" id="mmu:622408"/>
<dbReference type="UCSC" id="uc007rxa.1">
    <property type="organism name" value="mouse"/>
</dbReference>
<dbReference type="AGR" id="MGI:3648807"/>
<dbReference type="CTD" id="345643"/>
<dbReference type="MGI" id="MGI:3648807">
    <property type="gene designation" value="Mcidas"/>
</dbReference>
<dbReference type="VEuPathDB" id="HostDB:ENSMUSG00000074651"/>
<dbReference type="eggNOG" id="ENOG502R4B5">
    <property type="taxonomic scope" value="Eukaryota"/>
</dbReference>
<dbReference type="GeneTree" id="ENSGT00940000153270"/>
<dbReference type="HOGENOM" id="CLU_063884_0_0_1"/>
<dbReference type="InParanoid" id="Q3UZ45"/>
<dbReference type="OMA" id="PCDISPF"/>
<dbReference type="OrthoDB" id="9445365at2759"/>
<dbReference type="PhylomeDB" id="Q3UZ45"/>
<dbReference type="TreeFam" id="TF101171"/>
<dbReference type="BioGRID-ORCS" id="622408">
    <property type="hits" value="4 hits in 76 CRISPR screens"/>
</dbReference>
<dbReference type="PRO" id="PR:Q3UZ45"/>
<dbReference type="Proteomes" id="UP000000589">
    <property type="component" value="Chromosome 13"/>
</dbReference>
<dbReference type="RNAct" id="Q3UZ45">
    <property type="molecule type" value="protein"/>
</dbReference>
<dbReference type="Bgee" id="ENSMUSG00000074651">
    <property type="expression patterns" value="Expressed in vascular system and 17 other cell types or tissues"/>
</dbReference>
<dbReference type="GO" id="GO:0016604">
    <property type="term" value="C:nuclear body"/>
    <property type="evidence" value="ECO:0007669"/>
    <property type="project" value="Ensembl"/>
</dbReference>
<dbReference type="GO" id="GO:0005634">
    <property type="term" value="C:nucleus"/>
    <property type="evidence" value="ECO:0000250"/>
    <property type="project" value="UniProtKB"/>
</dbReference>
<dbReference type="GO" id="GO:0042802">
    <property type="term" value="F:identical protein binding"/>
    <property type="evidence" value="ECO:0007669"/>
    <property type="project" value="Ensembl"/>
</dbReference>
<dbReference type="GO" id="GO:0098534">
    <property type="term" value="P:centriole assembly"/>
    <property type="evidence" value="ECO:0000250"/>
    <property type="project" value="UniProtKB"/>
</dbReference>
<dbReference type="GO" id="GO:0060271">
    <property type="term" value="P:cilium assembly"/>
    <property type="evidence" value="ECO:0000315"/>
    <property type="project" value="MGI"/>
</dbReference>
<dbReference type="GO" id="GO:0044458">
    <property type="term" value="P:motile cilium assembly"/>
    <property type="evidence" value="ECO:0000250"/>
    <property type="project" value="UniProtKB"/>
</dbReference>
<dbReference type="GO" id="GO:1903251">
    <property type="term" value="P:multi-ciliated epithelial cell differentiation"/>
    <property type="evidence" value="ECO:0000250"/>
    <property type="project" value="UniProtKB"/>
</dbReference>
<dbReference type="GO" id="GO:0045944">
    <property type="term" value="P:positive regulation of transcription by RNA polymerase II"/>
    <property type="evidence" value="ECO:0000250"/>
    <property type="project" value="UniProtKB"/>
</dbReference>
<dbReference type="GO" id="GO:1902017">
    <property type="term" value="P:regulation of cilium assembly"/>
    <property type="evidence" value="ECO:0000250"/>
    <property type="project" value="UniProtKB"/>
</dbReference>
<dbReference type="GO" id="GO:0030174">
    <property type="term" value="P:regulation of DNA-templated DNA replication initiation"/>
    <property type="evidence" value="ECO:0007669"/>
    <property type="project" value="Ensembl"/>
</dbReference>
<dbReference type="GO" id="GO:0007346">
    <property type="term" value="P:regulation of mitotic cell cycle"/>
    <property type="evidence" value="ECO:0000250"/>
    <property type="project" value="UniProtKB"/>
</dbReference>
<dbReference type="GO" id="GO:0072520">
    <property type="term" value="P:seminiferous tubule development"/>
    <property type="evidence" value="ECO:0000315"/>
    <property type="project" value="MGI"/>
</dbReference>
<dbReference type="GO" id="GO:0007338">
    <property type="term" value="P:single fertilization"/>
    <property type="evidence" value="ECO:0000315"/>
    <property type="project" value="MGI"/>
</dbReference>
<dbReference type="GO" id="GO:0007283">
    <property type="term" value="P:spermatogenesis"/>
    <property type="evidence" value="ECO:0000315"/>
    <property type="project" value="MGI"/>
</dbReference>
<dbReference type="CDD" id="cd22590">
    <property type="entry name" value="McIdas_CC"/>
    <property type="match status" value="1"/>
</dbReference>
<dbReference type="FunFam" id="1.20.5.1180:FF:000001">
    <property type="entry name" value="Truncated geminin"/>
    <property type="match status" value="1"/>
</dbReference>
<dbReference type="Gene3D" id="1.20.5.1180">
    <property type="entry name" value="Geminin coiled-coil domain"/>
    <property type="match status" value="1"/>
</dbReference>
<dbReference type="InterPro" id="IPR022786">
    <property type="entry name" value="Geminin/Multicilin"/>
</dbReference>
<dbReference type="PANTHER" id="PTHR13372">
    <property type="entry name" value="GEMININ"/>
    <property type="match status" value="1"/>
</dbReference>
<dbReference type="PANTHER" id="PTHR13372:SF3">
    <property type="entry name" value="MULTICILIN"/>
    <property type="match status" value="1"/>
</dbReference>
<dbReference type="Pfam" id="PF07412">
    <property type="entry name" value="Geminin"/>
    <property type="match status" value="1"/>
</dbReference>
<dbReference type="SUPFAM" id="SSF111469">
    <property type="entry name" value="Geminin coiled-coil domain"/>
    <property type="match status" value="1"/>
</dbReference>
<sequence>MQACEGSAAGRRAFDSICPNRMLDLSRRTLGKPGKPERKFVPSWKSFSGCGGGSPVAVYEDPPDAEPAPLPALTTIDLQDLADCTSLLGTEASPSGDSSASQNPSLQTEEDFNLQNFRDAMDDLIADSSSLMSPPLTNSDFPFSPCDVSSFGSCLSPSLDPPALGSPDLPPPPTEQYWKEVADQNQRALGTALIENNQLHVTLTQKQEEIASLRERNVQLKELASRTRHLASVLDKLMITQSPAEPFQIKATTKRSLEELFCAAGQAGQGCAEVDAILRDISQRCEEALHNRDPKRPRLQPEPDSKDCSSRNLHGAFRGLRTDCSASSVNLSHSELEEGGSFSTPIRSHSTIRTLAFPQGKAFTIRTVTGGYKFRWVPS</sequence>
<proteinExistence type="evidence at protein level"/>
<feature type="chain" id="PRO_0000411077" description="Multicilin">
    <location>
        <begin position="1"/>
        <end position="379"/>
    </location>
</feature>
<feature type="region of interest" description="Necessary and sufficient for its degradation during the cell cycle" evidence="1">
    <location>
        <begin position="1"/>
        <end position="129"/>
    </location>
</feature>
<feature type="region of interest" description="Disordered" evidence="4">
    <location>
        <begin position="26"/>
        <end position="71"/>
    </location>
</feature>
<feature type="region of interest" description="Disordered" evidence="4">
    <location>
        <begin position="88"/>
        <end position="107"/>
    </location>
</feature>
<feature type="region of interest" description="Necessary and sufficient for proper nuclear localization" evidence="1">
    <location>
        <begin position="130"/>
        <end position="379"/>
    </location>
</feature>
<feature type="region of interest" description="Necessary and sufficient for interaction with GMNN and sufficient for homodimerization" evidence="1">
    <location>
        <begin position="171"/>
        <end position="241"/>
    </location>
</feature>
<feature type="region of interest" description="Disordered" evidence="4">
    <location>
        <begin position="291"/>
        <end position="312"/>
    </location>
</feature>
<feature type="coiled-coil region" evidence="2">
    <location>
        <begin position="175"/>
        <end position="223"/>
    </location>
</feature>
<feature type="compositionally biased region" description="Polar residues" evidence="4">
    <location>
        <begin position="92"/>
        <end position="107"/>
    </location>
</feature>
<feature type="compositionally biased region" description="Basic and acidic residues" evidence="4">
    <location>
        <begin position="291"/>
        <end position="309"/>
    </location>
</feature>
<protein>
    <recommendedName>
        <fullName>Multicilin</fullName>
    </recommendedName>
    <alternativeName>
        <fullName>Multiciliate differentiation and DNA synthesis-associated cell cycle protein</fullName>
        <shortName>McIdas protein</shortName>
    </alternativeName>
    <alternativeName>
        <fullName>Protein Idas</fullName>
    </alternativeName>
</protein>